<evidence type="ECO:0000255" key="1">
    <source>
        <dbReference type="HAMAP-Rule" id="MF_04067"/>
    </source>
</evidence>
<name>NEP_I70A0</name>
<comment type="function">
    <text evidence="1">Mediates the nuclear export of encapsidated genomic RNAs (ribonucleoproteins, RNPs). Acts as an adapter between viral RNPs complexes and the nuclear export machinery of the cell. Possesses no intrinsic RNA-binding activity, but includes a C-terminal M1-binding domain. This domain is believed to allow recognition of RNPs bound to the protein M1. Since protein M1 is not available in large quantities before late stages of infection, such an indirect recognition mechanism probably ensures that genomic RNPs are not exported from the host nucleus until sufficient quantities of viral mRNA and progeny genomic RNA have been synthesized. Furthermore, the RNPs enter the host cytoplasm only when associated with the M1 protein that is necessary to guide them to the plasma membrane. May down-regulate viral RNA synthesis when overproduced.</text>
</comment>
<comment type="subunit">
    <text evidence="1">Interacts with protein M1. May interact with host nucleoporin RAB/HRB and exportin XPO1/CRM1.</text>
</comment>
<comment type="subcellular location">
    <subcellularLocation>
        <location evidence="1">Virion</location>
    </subcellularLocation>
    <subcellularLocation>
        <location evidence="1">Host nucleus</location>
    </subcellularLocation>
</comment>
<comment type="alternative products">
    <event type="alternative splicing"/>
    <isoform>
        <id>Q6XSV5-1</id>
        <name>NEP</name>
        <name>NS2</name>
        <sequence type="displayed"/>
    </isoform>
    <isoform>
        <id>Q6XSV4-1</id>
        <name>NS1</name>
        <sequence type="external"/>
    </isoform>
</comment>
<comment type="similarity">
    <text evidence="1">Belongs to the influenza viruses NEP family.</text>
</comment>
<gene>
    <name evidence="1" type="primary">NS</name>
</gene>
<accession>Q6XSV5</accession>
<organismHost>
    <name type="scientific">Aves</name>
    <dbReference type="NCBI Taxonomy" id="8782"/>
</organismHost>
<organismHost>
    <name type="scientific">Cetacea</name>
    <name type="common">whales</name>
    <dbReference type="NCBI Taxonomy" id="9721"/>
</organismHost>
<organismHost>
    <name type="scientific">Homo sapiens</name>
    <name type="common">Human</name>
    <dbReference type="NCBI Taxonomy" id="9606"/>
</organismHost>
<organismHost>
    <name type="scientific">Phocidae</name>
    <name type="common">true seals</name>
    <dbReference type="NCBI Taxonomy" id="9709"/>
</organismHost>
<organismHost>
    <name type="scientific">Sus scrofa</name>
    <name type="common">Pig</name>
    <dbReference type="NCBI Taxonomy" id="9823"/>
</organismHost>
<organism>
    <name type="scientific">Influenza A virus (strain A/Qu/7/1970 H3N2)</name>
    <dbReference type="NCBI Taxonomy" id="221016"/>
    <lineage>
        <taxon>Viruses</taxon>
        <taxon>Riboviria</taxon>
        <taxon>Orthornavirae</taxon>
        <taxon>Negarnaviricota</taxon>
        <taxon>Polyploviricotina</taxon>
        <taxon>Insthoviricetes</taxon>
        <taxon>Articulavirales</taxon>
        <taxon>Orthomyxoviridae</taxon>
        <taxon>Alphainfluenzavirus</taxon>
        <taxon>Alphainfluenzavirus influenzae</taxon>
        <taxon>Influenza A virus</taxon>
    </lineage>
</organism>
<feature type="chain" id="PRO_0000324205" description="Nuclear export protein">
    <location>
        <begin position="1"/>
        <end position="121"/>
    </location>
</feature>
<feature type="short sequence motif" description="Nuclear export signal" evidence="1">
    <location>
        <begin position="12"/>
        <end position="21"/>
    </location>
</feature>
<feature type="short sequence motif" description="Nuclear export signal" evidence="1">
    <location>
        <begin position="85"/>
        <end position="94"/>
    </location>
</feature>
<reference key="1">
    <citation type="journal article" date="2004" name="Virology">
        <title>Genetic analysis of human H2N2 and early H3N2 influenza viruses, 1957-1972: evidence for genetic divergence and multiple reassortment events.</title>
        <authorList>
            <person name="Lindstrom S.E."/>
            <person name="Cox N.J."/>
            <person name="Klimov A."/>
        </authorList>
    </citation>
    <scope>NUCLEOTIDE SEQUENCE [GENOMIC RNA]</scope>
</reference>
<protein>
    <recommendedName>
        <fullName evidence="1">Nuclear export protein</fullName>
        <shortName evidence="1">NEP</shortName>
    </recommendedName>
    <alternativeName>
        <fullName evidence="1">Non-structural protein 2</fullName>
        <shortName evidence="1">NS2</shortName>
    </alternativeName>
</protein>
<proteinExistence type="inferred from homology"/>
<keyword id="KW-0025">Alternative splicing</keyword>
<keyword id="KW-1048">Host nucleus</keyword>
<keyword id="KW-0945">Host-virus interaction</keyword>
<keyword id="KW-0813">Transport</keyword>
<keyword id="KW-0946">Virion</keyword>
<dbReference type="EMBL" id="AY210305">
    <property type="protein sequence ID" value="AAO46756.1"/>
    <property type="molecule type" value="Genomic_RNA"/>
</dbReference>
<dbReference type="SMR" id="Q6XSV5"/>
<dbReference type="GO" id="GO:0042025">
    <property type="term" value="C:host cell nucleus"/>
    <property type="evidence" value="ECO:0007669"/>
    <property type="project" value="UniProtKB-SubCell"/>
</dbReference>
<dbReference type="GO" id="GO:0044423">
    <property type="term" value="C:virion component"/>
    <property type="evidence" value="ECO:0007669"/>
    <property type="project" value="UniProtKB-UniRule"/>
</dbReference>
<dbReference type="GO" id="GO:0039675">
    <property type="term" value="P:exit of virus from host cell nucleus through nuclear pore"/>
    <property type="evidence" value="ECO:0007669"/>
    <property type="project" value="UniProtKB-UniRule"/>
</dbReference>
<dbReference type="Gene3D" id="1.10.287.230">
    <property type="match status" value="1"/>
</dbReference>
<dbReference type="Gene3D" id="1.10.287.10">
    <property type="entry name" value="S15/NS1, RNA-binding"/>
    <property type="match status" value="1"/>
</dbReference>
<dbReference type="HAMAP" id="MF_04067">
    <property type="entry name" value="INFV_NEP"/>
    <property type="match status" value="1"/>
</dbReference>
<dbReference type="InterPro" id="IPR000968">
    <property type="entry name" value="Flu_NS2"/>
</dbReference>
<dbReference type="Pfam" id="PF00601">
    <property type="entry name" value="Flu_NS2"/>
    <property type="match status" value="1"/>
</dbReference>
<dbReference type="SUPFAM" id="SSF101156">
    <property type="entry name" value="Nonstructural protein ns2, Nep, M1-binding domain"/>
    <property type="match status" value="1"/>
</dbReference>
<sequence length="121" mass="14339">MDSNTVSSFQDILLRMSKMQLGSSSEDLNGMITQFESLKLYRDSLGEAVMRMGDLHSLQNRNGKWREQLGQKFEEIRWLIEEVRHRLKTTENSFEQITFMQALQLLFEVEQEIRTFSFQLI</sequence>